<gene>
    <name type="primary">lamc1</name>
</gene>
<feature type="signal peptide" evidence="2">
    <location>
        <begin position="1"/>
        <end position="19"/>
    </location>
</feature>
<feature type="chain" id="PRO_0000364201" description="Laminin subunit gamma-1">
    <location>
        <begin position="20"/>
        <end position="1593"/>
    </location>
</feature>
<feature type="domain" description="Laminin N-terminal" evidence="5">
    <location>
        <begin position="30"/>
        <end position="269"/>
    </location>
</feature>
<feature type="domain" description="Laminin EGF-like 1" evidence="4">
    <location>
        <begin position="270"/>
        <end position="325"/>
    </location>
</feature>
<feature type="domain" description="Laminin EGF-like 2" evidence="4">
    <location>
        <begin position="326"/>
        <end position="381"/>
    </location>
</feature>
<feature type="domain" description="Laminin EGF-like 3" evidence="4">
    <location>
        <begin position="382"/>
        <end position="428"/>
    </location>
</feature>
<feature type="domain" description="Laminin EGF-like 4" evidence="4">
    <location>
        <begin position="429"/>
        <end position="478"/>
    </location>
</feature>
<feature type="domain" description="Laminin IV type A" evidence="3">
    <location>
        <begin position="505"/>
        <end position="673"/>
    </location>
</feature>
<feature type="domain" description="Laminin EGF-like 5" evidence="4">
    <location>
        <begin position="708"/>
        <end position="756"/>
    </location>
</feature>
<feature type="domain" description="Laminin EGF-like 6" evidence="4">
    <location>
        <begin position="757"/>
        <end position="811"/>
    </location>
</feature>
<feature type="domain" description="Laminin EGF-like 7" evidence="4">
    <location>
        <begin position="812"/>
        <end position="867"/>
    </location>
</feature>
<feature type="domain" description="Laminin EGF-like 8" evidence="4">
    <location>
        <begin position="868"/>
        <end position="918"/>
    </location>
</feature>
<feature type="domain" description="Laminin EGF-like 9" evidence="4">
    <location>
        <begin position="919"/>
        <end position="966"/>
    </location>
</feature>
<feature type="domain" description="Laminin EGF-like 10" evidence="4">
    <location>
        <begin position="967"/>
        <end position="1014"/>
    </location>
</feature>
<feature type="region of interest" description="Domain II and I" evidence="1">
    <location>
        <begin position="1014"/>
        <end position="1593"/>
    </location>
</feature>
<feature type="coiled-coil region" evidence="2">
    <location>
        <begin position="1021"/>
        <end position="1580"/>
    </location>
</feature>
<feature type="glycosylation site" description="N-linked (GlcNAc...) asparagine" evidence="2">
    <location>
        <position position="44"/>
    </location>
</feature>
<feature type="glycosylation site" description="N-linked (GlcNAc...) asparagine" evidence="2">
    <location>
        <position position="118"/>
    </location>
</feature>
<feature type="glycosylation site" description="N-linked (GlcNAc...) asparagine" evidence="2">
    <location>
        <position position="560"/>
    </location>
</feature>
<feature type="glycosylation site" description="N-linked (GlcNAc...) asparagine" evidence="2">
    <location>
        <position position="634"/>
    </location>
</feature>
<feature type="glycosylation site" description="N-linked (GlcNAc...) asparagine" evidence="2">
    <location>
        <position position="654"/>
    </location>
</feature>
<feature type="glycosylation site" description="N-linked (GlcNAc...) asparagine" evidence="2">
    <location>
        <position position="1006"/>
    </location>
</feature>
<feature type="glycosylation site" description="N-linked (GlcNAc...) asparagine" evidence="2">
    <location>
        <position position="1091"/>
    </location>
</feature>
<feature type="glycosylation site" description="N-linked (GlcNAc...) asparagine" evidence="2">
    <location>
        <position position="1159"/>
    </location>
</feature>
<feature type="glycosylation site" description="N-linked (GlcNAc...) asparagine" evidence="2">
    <location>
        <position position="1189"/>
    </location>
</feature>
<feature type="glycosylation site" description="N-linked (GlcNAc...) asparagine" evidence="2">
    <location>
        <position position="1207"/>
    </location>
</feature>
<feature type="glycosylation site" description="N-linked (GlcNAc...) asparagine" evidence="2">
    <location>
        <position position="1254"/>
    </location>
</feature>
<feature type="glycosylation site" description="N-linked (GlcNAc...) asparagine" evidence="2">
    <location>
        <position position="1364"/>
    </location>
</feature>
<feature type="glycosylation site" description="N-linked (GlcNAc...) asparagine" evidence="2">
    <location>
        <position position="1379"/>
    </location>
</feature>
<feature type="disulfide bond" evidence="4">
    <location>
        <begin position="270"/>
        <end position="279"/>
    </location>
</feature>
<feature type="disulfide bond" evidence="4">
    <location>
        <begin position="272"/>
        <end position="289"/>
    </location>
</feature>
<feature type="disulfide bond" evidence="4">
    <location>
        <begin position="291"/>
        <end position="300"/>
    </location>
</feature>
<feature type="disulfide bond" evidence="4">
    <location>
        <begin position="303"/>
        <end position="323"/>
    </location>
</feature>
<feature type="disulfide bond" evidence="4">
    <location>
        <begin position="326"/>
        <end position="335"/>
    </location>
</feature>
<feature type="disulfide bond" evidence="4">
    <location>
        <begin position="328"/>
        <end position="351"/>
    </location>
</feature>
<feature type="disulfide bond" evidence="4">
    <location>
        <begin position="354"/>
        <end position="363"/>
    </location>
</feature>
<feature type="disulfide bond" evidence="4">
    <location>
        <begin position="366"/>
        <end position="379"/>
    </location>
</feature>
<feature type="disulfide bond" evidence="4">
    <location>
        <begin position="382"/>
        <end position="394"/>
    </location>
</feature>
<feature type="disulfide bond" evidence="4">
    <location>
        <begin position="384"/>
        <end position="400"/>
    </location>
</feature>
<feature type="disulfide bond" evidence="4">
    <location>
        <begin position="402"/>
        <end position="411"/>
    </location>
</feature>
<feature type="disulfide bond" evidence="4">
    <location>
        <begin position="414"/>
        <end position="426"/>
    </location>
</feature>
<feature type="disulfide bond" evidence="4">
    <location>
        <begin position="429"/>
        <end position="440"/>
    </location>
</feature>
<feature type="disulfide bond" evidence="4">
    <location>
        <begin position="431"/>
        <end position="447"/>
    </location>
</feature>
<feature type="disulfide bond" evidence="4">
    <location>
        <begin position="449"/>
        <end position="458"/>
    </location>
</feature>
<feature type="disulfide bond" evidence="4">
    <location>
        <begin position="461"/>
        <end position="476"/>
    </location>
</feature>
<feature type="disulfide bond" evidence="4">
    <location>
        <begin position="708"/>
        <end position="717"/>
    </location>
</feature>
<feature type="disulfide bond" evidence="4">
    <location>
        <begin position="710"/>
        <end position="724"/>
    </location>
</feature>
<feature type="disulfide bond" evidence="4">
    <location>
        <begin position="726"/>
        <end position="735"/>
    </location>
</feature>
<feature type="disulfide bond" evidence="4">
    <location>
        <begin position="738"/>
        <end position="754"/>
    </location>
</feature>
<feature type="disulfide bond" evidence="4">
    <location>
        <begin position="757"/>
        <end position="765"/>
    </location>
</feature>
<feature type="disulfide bond" evidence="4">
    <location>
        <begin position="759"/>
        <end position="776"/>
    </location>
</feature>
<feature type="disulfide bond" evidence="4">
    <location>
        <begin position="779"/>
        <end position="788"/>
    </location>
</feature>
<feature type="disulfide bond" evidence="4">
    <location>
        <begin position="791"/>
        <end position="809"/>
    </location>
</feature>
<feature type="disulfide bond" evidence="4">
    <location>
        <begin position="812"/>
        <end position="826"/>
    </location>
</feature>
<feature type="disulfide bond" evidence="4">
    <location>
        <begin position="814"/>
        <end position="833"/>
    </location>
</feature>
<feature type="disulfide bond" evidence="4">
    <location>
        <begin position="836"/>
        <end position="845"/>
    </location>
</feature>
<feature type="disulfide bond" evidence="4">
    <location>
        <begin position="848"/>
        <end position="865"/>
    </location>
</feature>
<feature type="disulfide bond" evidence="4">
    <location>
        <begin position="868"/>
        <end position="882"/>
    </location>
</feature>
<feature type="disulfide bond" evidence="4">
    <location>
        <begin position="870"/>
        <end position="889"/>
    </location>
</feature>
<feature type="disulfide bond" evidence="4">
    <location>
        <begin position="891"/>
        <end position="900"/>
    </location>
</feature>
<feature type="disulfide bond" evidence="4">
    <location>
        <begin position="903"/>
        <end position="916"/>
    </location>
</feature>
<feature type="disulfide bond" evidence="4">
    <location>
        <begin position="919"/>
        <end position="931"/>
    </location>
</feature>
<feature type="disulfide bond" evidence="4">
    <location>
        <begin position="921"/>
        <end position="938"/>
    </location>
</feature>
<feature type="disulfide bond" evidence="4">
    <location>
        <begin position="940"/>
        <end position="949"/>
    </location>
</feature>
<feature type="disulfide bond" evidence="4">
    <location>
        <begin position="952"/>
        <end position="964"/>
    </location>
</feature>
<feature type="disulfide bond" evidence="4">
    <location>
        <begin position="967"/>
        <end position="979"/>
    </location>
</feature>
<feature type="disulfide bond" evidence="4">
    <location>
        <begin position="969"/>
        <end position="985"/>
    </location>
</feature>
<feature type="disulfide bond" evidence="4">
    <location>
        <begin position="987"/>
        <end position="996"/>
    </location>
</feature>
<feature type="disulfide bond" evidence="4">
    <location>
        <begin position="999"/>
        <end position="1012"/>
    </location>
</feature>
<feature type="sequence conflict" description="In Ref. 1; AAM61766." evidence="6" ref="1">
    <original>D</original>
    <variation>E</variation>
    <location>
        <position position="819"/>
    </location>
</feature>
<proteinExistence type="evidence at transcript level"/>
<comment type="function">
    <text evidence="1">Binding to cells via a high affinity receptor, laminin is thought to mediate the attachment, migration and organization of cells into tissues during embryonic development by interacting with other extracellular matrix components.</text>
</comment>
<comment type="subunit">
    <text evidence="1">Laminin is a complex glycoprotein, consisting of three different polypeptide chains (alpha, beta, gamma), which are bound to each other by disulfide bonds into a cross-shaped molecule comprising one long and three short arms with globules at each end.</text>
</comment>
<comment type="subcellular location">
    <subcellularLocation>
        <location evidence="1">Secreted</location>
        <location evidence="1">Extracellular space</location>
        <location evidence="1">Extracellular matrix</location>
        <location evidence="1">Basement membrane</location>
    </subcellularLocation>
</comment>
<protein>
    <recommendedName>
        <fullName>Laminin subunit gamma-1</fullName>
    </recommendedName>
</protein>
<sequence length="1593" mass="176206">MSLFSCLLLWTLWAACSHGAMDECIDEDDRPQRCMPEFVNAAFNATVVATNTCGSPPEEFCVQTGVTGVTKSCHICNAADPRLHHGAVYLTDYNQPVQPTWWQSQTMLAGIQYPNSINLTLHLGKSFDITYVRLKFHTSRPESFAIYKRSSEDGPWTPYQYYSGSCEKTYSKNNRGFIRTGEDEQQALCTDEFSDISPLYGGNVAFSTLEGRPSAYNFDNSPVLQDWVTATDIRVTLNRLNTFGDEVFNDPKVLKSYYYAISDFAVGGRCKCNGHASECVKNEYSKLVCNCKHNTEGADCNVCKPFYNDRPWRRATAENPNECLPCNCNGKSAECYFDPELYRATGHGGHCRNCADNTDGPKCERCLANYYREASGQRCLSCGCNPVGSLSTQCDNTGRCSCKPGVMGDKCDRCQPGYHSLSEAGCRPCSCNPAGSTQECDVQTGRCQCKENVDGFNCDRCKLGYFNLDPQNPQGCTPCFCFQHSTVCESADGYSVHKITSTFDRDDEGWKGKQRDDSSVPVQWSPSSGEISLISEDYFPIYFVAPDKFLHNQLLSYGQNLTLNFRIQRHDARLSAEDVVLEGSGLRVAVPLIAQGNSYPGEETQTFVFRLHDTTDYPWRPTIKHADFQKLLYNLTSIMIRGTYSAQSAGYLDNVSLVTARRGPGTPARWVEKCTCPQGYLGQHCEQCDQGFRRSRPELRRFSTCERCNCNGHSDTCDPETGMCNCQHNTAGLSCERCKDGFYGDSTVGSSSDCKACPCPAGATCAVVPKTNEVVCTNCPTGTTGKRCELCDDGFFGDPLGEKGPVRACRACSCNNNIDPNAVGNCNRESGECLKCIYNTAGVFCDRCKQGFYGDARAANVADKCKPCKCSPYGTVDRQTACSQVTGQCPCLPHVINRDCGACELGFYNLQSGKGCERCNCNPIGSTNGQCDIVSGQCECQPGVTGQHCERCEVNFFGFSSSGCKPCDCDPEGSESAQCKEDGRCHCRPGFVGSRCDMCEENYFYNRSTPGCQQCPNCYSLVRDKVNQQRQKLLDLQNLIDSLDNTETTVSDKAFEDRLKEAEKTIMDLLEEAQASKEVDKGLLDRLNNINKTLNNQWNRLQNIKNTVDNTGAQADRARNRVRDAENLINTAREELDKAKEAISKVDIKIPTTSGDPNNMTLLAEEARKLSEKHKADADQIEKIAKDANDTSTKAYNMLKKALDGENKTSSDIDELNRKYLEAKDLAKNLEKQAAKVHAEAEEAGNKALKIYANLTSLPPINTKTLEDDANKIKKEASDLDKLIDKTEKEYNDLREDLRGKETEVRKLLDKGKTEQQTADQLLARADAAKALAEEAAKKGKSTFQEAQDILNNLRDFDKRVNDNKTAAEDAMRRIPQINATINEANDKTRRAEAALGNAAADAKDAKAKAEEAEKIANDVQKGSAKTKADAEKAFEDTMKLDKDVDKMMDQLTAAEKELEKKKAEADTDMMMASMASDNAKDAEGNARKAKSAVREVLNTINALLGQLGNIDKVDLSKLNQIDNALKDAKDKMAGSELDRKLKELNDIAKSQEDMISDYDRQIQEIRADIANLNDIKNTLPEGCFNTPSLERP</sequence>
<accession>Q1LVF0</accession>
<accession>Q8JHV8</accession>
<organism>
    <name type="scientific">Danio rerio</name>
    <name type="common">Zebrafish</name>
    <name type="synonym">Brachydanio rerio</name>
    <dbReference type="NCBI Taxonomy" id="7955"/>
    <lineage>
        <taxon>Eukaryota</taxon>
        <taxon>Metazoa</taxon>
        <taxon>Chordata</taxon>
        <taxon>Craniata</taxon>
        <taxon>Vertebrata</taxon>
        <taxon>Euteleostomi</taxon>
        <taxon>Actinopterygii</taxon>
        <taxon>Neopterygii</taxon>
        <taxon>Teleostei</taxon>
        <taxon>Ostariophysi</taxon>
        <taxon>Cypriniformes</taxon>
        <taxon>Danionidae</taxon>
        <taxon>Danioninae</taxon>
        <taxon>Danio</taxon>
    </lineage>
</organism>
<dbReference type="EMBL" id="AF468048">
    <property type="protein sequence ID" value="AAM61766.1"/>
    <property type="molecule type" value="mRNA"/>
</dbReference>
<dbReference type="EMBL" id="BX681417">
    <property type="protein sequence ID" value="CAK05288.2"/>
    <property type="molecule type" value="Genomic_DNA"/>
</dbReference>
<dbReference type="EMBL" id="BX571812">
    <property type="protein sequence ID" value="CAK05288.2"/>
    <property type="status" value="JOINED"/>
    <property type="molecule type" value="Genomic_DNA"/>
</dbReference>
<dbReference type="EMBL" id="BX571812">
    <property type="protein sequence ID" value="CAQ13276.1"/>
    <property type="molecule type" value="Genomic_DNA"/>
</dbReference>
<dbReference type="EMBL" id="BX681417">
    <property type="protein sequence ID" value="CAQ13276.1"/>
    <property type="status" value="JOINED"/>
    <property type="molecule type" value="Genomic_DNA"/>
</dbReference>
<dbReference type="RefSeq" id="NP_775384.1">
    <property type="nucleotide sequence ID" value="NM_173277.1"/>
</dbReference>
<dbReference type="SMR" id="Q1LVF0"/>
<dbReference type="FunCoup" id="Q1LVF0">
    <property type="interactions" value="1376"/>
</dbReference>
<dbReference type="STRING" id="7955.ENSDARP00000024860"/>
<dbReference type="GlyCosmos" id="Q1LVF0">
    <property type="glycosylation" value="13 sites, No reported glycans"/>
</dbReference>
<dbReference type="PaxDb" id="7955-ENSDARP00000024860"/>
<dbReference type="PeptideAtlas" id="Q1LVF0"/>
<dbReference type="Ensembl" id="ENSDART00000004277">
    <property type="protein sequence ID" value="ENSDARP00000024860"/>
    <property type="gene ID" value="ENSDARG00000036279"/>
</dbReference>
<dbReference type="GeneID" id="286832"/>
<dbReference type="KEGG" id="dre:286832"/>
<dbReference type="AGR" id="ZFIN:ZDB-GENE-021226-3"/>
<dbReference type="CTD" id="3915"/>
<dbReference type="ZFIN" id="ZDB-GENE-021226-3">
    <property type="gene designation" value="lamc1"/>
</dbReference>
<dbReference type="eggNOG" id="KOG1836">
    <property type="taxonomic scope" value="Eukaryota"/>
</dbReference>
<dbReference type="HOGENOM" id="CLU_002471_1_0_1"/>
<dbReference type="InParanoid" id="Q1LVF0"/>
<dbReference type="OMA" id="RIHANPI"/>
<dbReference type="OrthoDB" id="430826at2759"/>
<dbReference type="PhylomeDB" id="Q1LVF0"/>
<dbReference type="TreeFam" id="TF352481"/>
<dbReference type="PRO" id="PR:Q1LVF0"/>
<dbReference type="Proteomes" id="UP000000437">
    <property type="component" value="Chromosome 2"/>
</dbReference>
<dbReference type="Bgee" id="ENSDARG00000036279">
    <property type="expression patterns" value="Expressed in paraxial mesoderm and 59 other cell types or tissues"/>
</dbReference>
<dbReference type="GO" id="GO:0005604">
    <property type="term" value="C:basement membrane"/>
    <property type="evidence" value="ECO:0000318"/>
    <property type="project" value="GO_Central"/>
</dbReference>
<dbReference type="GO" id="GO:0005576">
    <property type="term" value="C:extracellular region"/>
    <property type="evidence" value="ECO:0007669"/>
    <property type="project" value="UniProtKB-KW"/>
</dbReference>
<dbReference type="GO" id="GO:0009887">
    <property type="term" value="P:animal organ morphogenesis"/>
    <property type="evidence" value="ECO:0000318"/>
    <property type="project" value="GO_Central"/>
</dbReference>
<dbReference type="GO" id="GO:0007411">
    <property type="term" value="P:axon guidance"/>
    <property type="evidence" value="ECO:0000315"/>
    <property type="project" value="ZFIN"/>
</dbReference>
<dbReference type="GO" id="GO:0007420">
    <property type="term" value="P:brain development"/>
    <property type="evidence" value="ECO:0000315"/>
    <property type="project" value="ZFIN"/>
</dbReference>
<dbReference type="GO" id="GO:0048854">
    <property type="term" value="P:brain morphogenesis"/>
    <property type="evidence" value="ECO:0000315"/>
    <property type="project" value="ZFIN"/>
</dbReference>
<dbReference type="GO" id="GO:0007155">
    <property type="term" value="P:cell adhesion"/>
    <property type="evidence" value="ECO:0007669"/>
    <property type="project" value="UniProtKB-KW"/>
</dbReference>
<dbReference type="GO" id="GO:0050908">
    <property type="term" value="P:detection of light stimulus involved in visual perception"/>
    <property type="evidence" value="ECO:0000315"/>
    <property type="project" value="ZFIN"/>
</dbReference>
<dbReference type="GO" id="GO:0001654">
    <property type="term" value="P:eye development"/>
    <property type="evidence" value="ECO:0000315"/>
    <property type="project" value="ZFIN"/>
</dbReference>
<dbReference type="GO" id="GO:0007517">
    <property type="term" value="P:muscle organ development"/>
    <property type="evidence" value="ECO:0000315"/>
    <property type="project" value="ZFIN"/>
</dbReference>
<dbReference type="GO" id="GO:0030903">
    <property type="term" value="P:notochord development"/>
    <property type="evidence" value="ECO:0000315"/>
    <property type="project" value="ZFIN"/>
</dbReference>
<dbReference type="GO" id="GO:0048570">
    <property type="term" value="P:notochord morphogenesis"/>
    <property type="evidence" value="ECO:0000315"/>
    <property type="project" value="ZFIN"/>
</dbReference>
<dbReference type="GO" id="GO:0007634">
    <property type="term" value="P:optokinetic behavior"/>
    <property type="evidence" value="ECO:0000315"/>
    <property type="project" value="ZFIN"/>
</dbReference>
<dbReference type="GO" id="GO:0031290">
    <property type="term" value="P:retinal ganglion cell axon guidance"/>
    <property type="evidence" value="ECO:0000315"/>
    <property type="project" value="ZFIN"/>
</dbReference>
<dbReference type="GO" id="GO:0007519">
    <property type="term" value="P:skeletal muscle tissue development"/>
    <property type="evidence" value="ECO:0000315"/>
    <property type="project" value="ZFIN"/>
</dbReference>
<dbReference type="GO" id="GO:0061053">
    <property type="term" value="P:somite development"/>
    <property type="evidence" value="ECO:0000315"/>
    <property type="project" value="ZFIN"/>
</dbReference>
<dbReference type="GO" id="GO:0009888">
    <property type="term" value="P:tissue development"/>
    <property type="evidence" value="ECO:0000318"/>
    <property type="project" value="GO_Central"/>
</dbReference>
<dbReference type="CDD" id="cd00055">
    <property type="entry name" value="EGF_Lam"/>
    <property type="match status" value="9"/>
</dbReference>
<dbReference type="FunFam" id="2.10.25.10:FF:000067">
    <property type="entry name" value="Laminin subunit gamma 1"/>
    <property type="match status" value="2"/>
</dbReference>
<dbReference type="FunFam" id="2.10.25.10:FF:000193">
    <property type="entry name" value="Laminin subunit gamma 1"/>
    <property type="match status" value="1"/>
</dbReference>
<dbReference type="FunFam" id="2.10.25.10:FF:000758">
    <property type="entry name" value="Laminin subunit gamma 1"/>
    <property type="match status" value="1"/>
</dbReference>
<dbReference type="FunFam" id="2.60.120.260:FF:000018">
    <property type="entry name" value="Laminin subunit gamma 1"/>
    <property type="match status" value="1"/>
</dbReference>
<dbReference type="FunFam" id="2.10.25.10:FF:000174">
    <property type="entry name" value="Laminin subunit gamma-1"/>
    <property type="match status" value="1"/>
</dbReference>
<dbReference type="FunFam" id="2.10.25.10:FF:001192">
    <property type="entry name" value="Laminin subunit gamma-1"/>
    <property type="match status" value="1"/>
</dbReference>
<dbReference type="FunFam" id="2.10.25.10:FF:000105">
    <property type="entry name" value="laminin subunit gamma-1"/>
    <property type="match status" value="1"/>
</dbReference>
<dbReference type="FunFam" id="2.10.25.10:FF:000163">
    <property type="entry name" value="laminin subunit gamma-1"/>
    <property type="match status" value="1"/>
</dbReference>
<dbReference type="FunFam" id="2.10.25.10:FF:000166">
    <property type="entry name" value="laminin subunit gamma-1"/>
    <property type="match status" value="1"/>
</dbReference>
<dbReference type="Gene3D" id="2.60.120.260">
    <property type="entry name" value="Galactose-binding domain-like"/>
    <property type="match status" value="1"/>
</dbReference>
<dbReference type="Gene3D" id="2.10.25.10">
    <property type="entry name" value="Laminin"/>
    <property type="match status" value="9"/>
</dbReference>
<dbReference type="Gene3D" id="1.10.287.950">
    <property type="entry name" value="Methyl-accepting chemotaxis protein"/>
    <property type="match status" value="1"/>
</dbReference>
<dbReference type="InterPro" id="IPR000742">
    <property type="entry name" value="EGF-like_dom"/>
</dbReference>
<dbReference type="InterPro" id="IPR050440">
    <property type="entry name" value="Laminin/Netrin_ECM"/>
</dbReference>
<dbReference type="InterPro" id="IPR000034">
    <property type="entry name" value="Laminin_IV"/>
</dbReference>
<dbReference type="InterPro" id="IPR008211">
    <property type="entry name" value="Laminin_N"/>
</dbReference>
<dbReference type="InterPro" id="IPR002049">
    <property type="entry name" value="LE_dom"/>
</dbReference>
<dbReference type="InterPro" id="IPR056863">
    <property type="entry name" value="LMN_ATRN_NET-like_EGF"/>
</dbReference>
<dbReference type="PANTHER" id="PTHR10574:SF270">
    <property type="entry name" value="LAMININ SUBUNIT GAMMA-1"/>
    <property type="match status" value="1"/>
</dbReference>
<dbReference type="PANTHER" id="PTHR10574">
    <property type="entry name" value="NETRIN/LAMININ-RELATED"/>
    <property type="match status" value="1"/>
</dbReference>
<dbReference type="Pfam" id="PF00053">
    <property type="entry name" value="EGF_laminin"/>
    <property type="match status" value="10"/>
</dbReference>
<dbReference type="Pfam" id="PF24973">
    <property type="entry name" value="EGF_LMN_ATRN"/>
    <property type="match status" value="1"/>
</dbReference>
<dbReference type="Pfam" id="PF00052">
    <property type="entry name" value="Laminin_B"/>
    <property type="match status" value="1"/>
</dbReference>
<dbReference type="Pfam" id="PF00055">
    <property type="entry name" value="Laminin_N"/>
    <property type="match status" value="1"/>
</dbReference>
<dbReference type="PRINTS" id="PR00011">
    <property type="entry name" value="EGFLAMININ"/>
</dbReference>
<dbReference type="SMART" id="SM00181">
    <property type="entry name" value="EGF"/>
    <property type="match status" value="5"/>
</dbReference>
<dbReference type="SMART" id="SM00180">
    <property type="entry name" value="EGF_Lam"/>
    <property type="match status" value="10"/>
</dbReference>
<dbReference type="SMART" id="SM01411">
    <property type="entry name" value="Ephrin_rec_like"/>
    <property type="match status" value="4"/>
</dbReference>
<dbReference type="SMART" id="SM00281">
    <property type="entry name" value="LamB"/>
    <property type="match status" value="1"/>
</dbReference>
<dbReference type="SMART" id="SM00136">
    <property type="entry name" value="LamNT"/>
    <property type="match status" value="1"/>
</dbReference>
<dbReference type="SUPFAM" id="SSF57196">
    <property type="entry name" value="EGF/Laminin"/>
    <property type="match status" value="10"/>
</dbReference>
<dbReference type="SUPFAM" id="SSF58104">
    <property type="entry name" value="Methyl-accepting chemotaxis protein (MCP) signaling domain"/>
    <property type="match status" value="1"/>
</dbReference>
<dbReference type="PROSITE" id="PS00022">
    <property type="entry name" value="EGF_1"/>
    <property type="match status" value="7"/>
</dbReference>
<dbReference type="PROSITE" id="PS01186">
    <property type="entry name" value="EGF_2"/>
    <property type="match status" value="2"/>
</dbReference>
<dbReference type="PROSITE" id="PS01248">
    <property type="entry name" value="EGF_LAM_1"/>
    <property type="match status" value="10"/>
</dbReference>
<dbReference type="PROSITE" id="PS50027">
    <property type="entry name" value="EGF_LAM_2"/>
    <property type="match status" value="10"/>
</dbReference>
<dbReference type="PROSITE" id="PS51115">
    <property type="entry name" value="LAMININ_IVA"/>
    <property type="match status" value="1"/>
</dbReference>
<dbReference type="PROSITE" id="PS51117">
    <property type="entry name" value="LAMININ_NTER"/>
    <property type="match status" value="1"/>
</dbReference>
<evidence type="ECO:0000250" key="1"/>
<evidence type="ECO:0000255" key="2"/>
<evidence type="ECO:0000255" key="3">
    <source>
        <dbReference type="PROSITE-ProRule" id="PRU00458"/>
    </source>
</evidence>
<evidence type="ECO:0000255" key="4">
    <source>
        <dbReference type="PROSITE-ProRule" id="PRU00460"/>
    </source>
</evidence>
<evidence type="ECO:0000255" key="5">
    <source>
        <dbReference type="PROSITE-ProRule" id="PRU00466"/>
    </source>
</evidence>
<evidence type="ECO:0000305" key="6"/>
<name>LAMC1_DANRE</name>
<reference key="1">
    <citation type="journal article" date="2002" name="Development">
        <title>Zebrafish mutants identify an essential role for laminins in notochord formation.</title>
        <authorList>
            <person name="Parsons M.J."/>
            <person name="Pollard S.M."/>
            <person name="Saude L."/>
            <person name="Feldman B."/>
            <person name="Coutinho P."/>
            <person name="Hirst E.M.A."/>
            <person name="Stemple D.L."/>
        </authorList>
    </citation>
    <scope>NUCLEOTIDE SEQUENCE [MRNA]</scope>
</reference>
<reference key="2">
    <citation type="journal article" date="2013" name="Nature">
        <title>The zebrafish reference genome sequence and its relationship to the human genome.</title>
        <authorList>
            <person name="Howe K."/>
            <person name="Clark M.D."/>
            <person name="Torroja C.F."/>
            <person name="Torrance J."/>
            <person name="Berthelot C."/>
            <person name="Muffato M."/>
            <person name="Collins J.E."/>
            <person name="Humphray S."/>
            <person name="McLaren K."/>
            <person name="Matthews L."/>
            <person name="McLaren S."/>
            <person name="Sealy I."/>
            <person name="Caccamo M."/>
            <person name="Churcher C."/>
            <person name="Scott C."/>
            <person name="Barrett J.C."/>
            <person name="Koch R."/>
            <person name="Rauch G.J."/>
            <person name="White S."/>
            <person name="Chow W."/>
            <person name="Kilian B."/>
            <person name="Quintais L.T."/>
            <person name="Guerra-Assuncao J.A."/>
            <person name="Zhou Y."/>
            <person name="Gu Y."/>
            <person name="Yen J."/>
            <person name="Vogel J.H."/>
            <person name="Eyre T."/>
            <person name="Redmond S."/>
            <person name="Banerjee R."/>
            <person name="Chi J."/>
            <person name="Fu B."/>
            <person name="Langley E."/>
            <person name="Maguire S.F."/>
            <person name="Laird G.K."/>
            <person name="Lloyd D."/>
            <person name="Kenyon E."/>
            <person name="Donaldson S."/>
            <person name="Sehra H."/>
            <person name="Almeida-King J."/>
            <person name="Loveland J."/>
            <person name="Trevanion S."/>
            <person name="Jones M."/>
            <person name="Quail M."/>
            <person name="Willey D."/>
            <person name="Hunt A."/>
            <person name="Burton J."/>
            <person name="Sims S."/>
            <person name="McLay K."/>
            <person name="Plumb B."/>
            <person name="Davis J."/>
            <person name="Clee C."/>
            <person name="Oliver K."/>
            <person name="Clark R."/>
            <person name="Riddle C."/>
            <person name="Elliot D."/>
            <person name="Threadgold G."/>
            <person name="Harden G."/>
            <person name="Ware D."/>
            <person name="Begum S."/>
            <person name="Mortimore B."/>
            <person name="Kerry G."/>
            <person name="Heath P."/>
            <person name="Phillimore B."/>
            <person name="Tracey A."/>
            <person name="Corby N."/>
            <person name="Dunn M."/>
            <person name="Johnson C."/>
            <person name="Wood J."/>
            <person name="Clark S."/>
            <person name="Pelan S."/>
            <person name="Griffiths G."/>
            <person name="Smith M."/>
            <person name="Glithero R."/>
            <person name="Howden P."/>
            <person name="Barker N."/>
            <person name="Lloyd C."/>
            <person name="Stevens C."/>
            <person name="Harley J."/>
            <person name="Holt K."/>
            <person name="Panagiotidis G."/>
            <person name="Lovell J."/>
            <person name="Beasley H."/>
            <person name="Henderson C."/>
            <person name="Gordon D."/>
            <person name="Auger K."/>
            <person name="Wright D."/>
            <person name="Collins J."/>
            <person name="Raisen C."/>
            <person name="Dyer L."/>
            <person name="Leung K."/>
            <person name="Robertson L."/>
            <person name="Ambridge K."/>
            <person name="Leongamornlert D."/>
            <person name="McGuire S."/>
            <person name="Gilderthorp R."/>
            <person name="Griffiths C."/>
            <person name="Manthravadi D."/>
            <person name="Nichol S."/>
            <person name="Barker G."/>
            <person name="Whitehead S."/>
            <person name="Kay M."/>
            <person name="Brown J."/>
            <person name="Murnane C."/>
            <person name="Gray E."/>
            <person name="Humphries M."/>
            <person name="Sycamore N."/>
            <person name="Barker D."/>
            <person name="Saunders D."/>
            <person name="Wallis J."/>
            <person name="Babbage A."/>
            <person name="Hammond S."/>
            <person name="Mashreghi-Mohammadi M."/>
            <person name="Barr L."/>
            <person name="Martin S."/>
            <person name="Wray P."/>
            <person name="Ellington A."/>
            <person name="Matthews N."/>
            <person name="Ellwood M."/>
            <person name="Woodmansey R."/>
            <person name="Clark G."/>
            <person name="Cooper J."/>
            <person name="Tromans A."/>
            <person name="Grafham D."/>
            <person name="Skuce C."/>
            <person name="Pandian R."/>
            <person name="Andrews R."/>
            <person name="Harrison E."/>
            <person name="Kimberley A."/>
            <person name="Garnett J."/>
            <person name="Fosker N."/>
            <person name="Hall R."/>
            <person name="Garner P."/>
            <person name="Kelly D."/>
            <person name="Bird C."/>
            <person name="Palmer S."/>
            <person name="Gehring I."/>
            <person name="Berger A."/>
            <person name="Dooley C.M."/>
            <person name="Ersan-Urun Z."/>
            <person name="Eser C."/>
            <person name="Geiger H."/>
            <person name="Geisler M."/>
            <person name="Karotki L."/>
            <person name="Kirn A."/>
            <person name="Konantz J."/>
            <person name="Konantz M."/>
            <person name="Oberlander M."/>
            <person name="Rudolph-Geiger S."/>
            <person name="Teucke M."/>
            <person name="Lanz C."/>
            <person name="Raddatz G."/>
            <person name="Osoegawa K."/>
            <person name="Zhu B."/>
            <person name="Rapp A."/>
            <person name="Widaa S."/>
            <person name="Langford C."/>
            <person name="Yang F."/>
            <person name="Schuster S.C."/>
            <person name="Carter N.P."/>
            <person name="Harrow J."/>
            <person name="Ning Z."/>
            <person name="Herrero J."/>
            <person name="Searle S.M."/>
            <person name="Enright A."/>
            <person name="Geisler R."/>
            <person name="Plasterk R.H."/>
            <person name="Lee C."/>
            <person name="Westerfield M."/>
            <person name="de Jong P.J."/>
            <person name="Zon L.I."/>
            <person name="Postlethwait J.H."/>
            <person name="Nusslein-Volhard C."/>
            <person name="Hubbard T.J."/>
            <person name="Roest Crollius H."/>
            <person name="Rogers J."/>
            <person name="Stemple D.L."/>
        </authorList>
    </citation>
    <scope>NUCLEOTIDE SEQUENCE [LARGE SCALE GENOMIC DNA]</scope>
    <source>
        <strain>Tuebingen</strain>
    </source>
</reference>
<keyword id="KW-0084">Basement membrane</keyword>
<keyword id="KW-0130">Cell adhesion</keyword>
<keyword id="KW-0175">Coiled coil</keyword>
<keyword id="KW-1015">Disulfide bond</keyword>
<keyword id="KW-0272">Extracellular matrix</keyword>
<keyword id="KW-0325">Glycoprotein</keyword>
<keyword id="KW-0424">Laminin EGF-like domain</keyword>
<keyword id="KW-1185">Reference proteome</keyword>
<keyword id="KW-0677">Repeat</keyword>
<keyword id="KW-0964">Secreted</keyword>
<keyword id="KW-0732">Signal</keyword>